<evidence type="ECO:0000250" key="1">
    <source>
        <dbReference type="UniProtKB" id="P62825"/>
    </source>
</evidence>
<evidence type="ECO:0000255" key="2">
    <source>
        <dbReference type="PROSITE-ProRule" id="PRU00752"/>
    </source>
</evidence>
<evidence type="ECO:0000269" key="3">
    <source>
    </source>
</evidence>
<evidence type="ECO:0000269" key="4">
    <source>
    </source>
</evidence>
<evidence type="ECO:0000269" key="5">
    <source>
    </source>
</evidence>
<evidence type="ECO:0000269" key="6">
    <source>
    </source>
</evidence>
<evidence type="ECO:0000269" key="7">
    <source>
    </source>
</evidence>
<evidence type="ECO:0000305" key="8"/>
<evidence type="ECO:0007744" key="9">
    <source>
    </source>
</evidence>
<evidence type="ECO:0007829" key="10">
    <source>
        <dbReference type="PDB" id="3M1I"/>
    </source>
</evidence>
<evidence type="ECO:0007829" key="11">
    <source>
        <dbReference type="PDB" id="9B3I"/>
    </source>
</evidence>
<keyword id="KW-0002">3D-structure</keyword>
<keyword id="KW-0007">Acetylation</keyword>
<keyword id="KW-0903">Direct protein sequencing</keyword>
<keyword id="KW-0342">GTP-binding</keyword>
<keyword id="KW-0547">Nucleotide-binding</keyword>
<keyword id="KW-0539">Nucleus</keyword>
<keyword id="KW-0597">Phosphoprotein</keyword>
<keyword id="KW-0653">Protein transport</keyword>
<keyword id="KW-1185">Reference proteome</keyword>
<keyword id="KW-0813">Transport</keyword>
<protein>
    <recommendedName>
        <fullName>GTP-binding nuclear protein GSP1/CNR1</fullName>
    </recommendedName>
    <alternativeName>
        <fullName>Chromosome stability protein 17</fullName>
    </alternativeName>
    <alternativeName>
        <fullName>GTPase Ran homolog</fullName>
    </alternativeName>
    <alternativeName>
        <fullName>Genetic suppressor of PRP20-1</fullName>
    </alternativeName>
</protein>
<reference key="1">
    <citation type="journal article" date="1993" name="EMBO J.">
        <title>Regulation of RNA processing and transport by a nuclear guanine nucleotide release protein and members of the Ras superfamily.</title>
        <authorList>
            <person name="Kadowaki T."/>
            <person name="Goldfarb D."/>
            <person name="Spitz L.M."/>
            <person name="Tartakoff A.M."/>
            <person name="Ohno M."/>
        </authorList>
    </citation>
    <scope>NUCLEOTIDE SEQUENCE [GENOMIC DNA]</scope>
</reference>
<reference key="2">
    <citation type="journal article" date="1993" name="Mol. Cell. Biol.">
        <title>GSP1 and GSP2, genetic suppressors of the prp20-1 mutant in Saccharomyces cerevisiae: GTP-binding proteins involved in the maintenance of nuclear organization.</title>
        <authorList>
            <person name="Belhumeur P."/>
            <person name="Lee A."/>
            <person name="Tam R."/>
            <person name="Dipaolo T."/>
            <person name="Fortin N."/>
            <person name="Clark M.W."/>
        </authorList>
    </citation>
    <scope>NUCLEOTIDE SEQUENCE [GENOMIC DNA]</scope>
</reference>
<reference key="3">
    <citation type="journal article" date="1997" name="Nature">
        <title>The nucleotide sequence of Saccharomyces cerevisiae chromosome XII.</title>
        <authorList>
            <person name="Johnston M."/>
            <person name="Hillier L.W."/>
            <person name="Riles L."/>
            <person name="Albermann K."/>
            <person name="Andre B."/>
            <person name="Ansorge W."/>
            <person name="Benes V."/>
            <person name="Brueckner M."/>
            <person name="Delius H."/>
            <person name="Dubois E."/>
            <person name="Duesterhoeft A."/>
            <person name="Entian K.-D."/>
            <person name="Floeth M."/>
            <person name="Goffeau A."/>
            <person name="Hebling U."/>
            <person name="Heumann K."/>
            <person name="Heuss-Neitzel D."/>
            <person name="Hilbert H."/>
            <person name="Hilger F."/>
            <person name="Kleine K."/>
            <person name="Koetter P."/>
            <person name="Louis E.J."/>
            <person name="Messenguy F."/>
            <person name="Mewes H.-W."/>
            <person name="Miosga T."/>
            <person name="Moestl D."/>
            <person name="Mueller-Auer S."/>
            <person name="Nentwich U."/>
            <person name="Obermaier B."/>
            <person name="Piravandi E."/>
            <person name="Pohl T.M."/>
            <person name="Portetelle D."/>
            <person name="Purnelle B."/>
            <person name="Rechmann S."/>
            <person name="Rieger M."/>
            <person name="Rinke M."/>
            <person name="Rose M."/>
            <person name="Scharfe M."/>
            <person name="Scherens B."/>
            <person name="Scholler P."/>
            <person name="Schwager C."/>
            <person name="Schwarz S."/>
            <person name="Underwood A.P."/>
            <person name="Urrestarazu L.A."/>
            <person name="Vandenbol M."/>
            <person name="Verhasselt P."/>
            <person name="Vierendeels F."/>
            <person name="Voet M."/>
            <person name="Volckaert G."/>
            <person name="Voss H."/>
            <person name="Wambutt R."/>
            <person name="Wedler E."/>
            <person name="Wedler H."/>
            <person name="Zimmermann F.K."/>
            <person name="Zollner A."/>
            <person name="Hani J."/>
            <person name="Hoheisel J.D."/>
        </authorList>
    </citation>
    <scope>NUCLEOTIDE SEQUENCE [LARGE SCALE GENOMIC DNA]</scope>
    <source>
        <strain>ATCC 204508 / S288c</strain>
    </source>
</reference>
<reference key="4">
    <citation type="journal article" date="2014" name="G3 (Bethesda)">
        <title>The reference genome sequence of Saccharomyces cerevisiae: Then and now.</title>
        <authorList>
            <person name="Engel S.R."/>
            <person name="Dietrich F.S."/>
            <person name="Fisk D.G."/>
            <person name="Binkley G."/>
            <person name="Balakrishnan R."/>
            <person name="Costanzo M.C."/>
            <person name="Dwight S.S."/>
            <person name="Hitz B.C."/>
            <person name="Karra K."/>
            <person name="Nash R.S."/>
            <person name="Weng S."/>
            <person name="Wong E.D."/>
            <person name="Lloyd P."/>
            <person name="Skrzypek M.S."/>
            <person name="Miyasato S.R."/>
            <person name="Simison M."/>
            <person name="Cherry J.M."/>
        </authorList>
    </citation>
    <scope>GENOME REANNOTATION</scope>
    <source>
        <strain>ATCC 204508 / S288c</strain>
    </source>
</reference>
<reference key="5">
    <citation type="journal article" date="2007" name="Genome Res.">
        <title>Approaching a complete repository of sequence-verified protein-encoding clones for Saccharomyces cerevisiae.</title>
        <authorList>
            <person name="Hu Y."/>
            <person name="Rolfs A."/>
            <person name="Bhullar B."/>
            <person name="Murthy T.V.S."/>
            <person name="Zhu C."/>
            <person name="Berger M.F."/>
            <person name="Camargo A.A."/>
            <person name="Kelley F."/>
            <person name="McCarron S."/>
            <person name="Jepson D."/>
            <person name="Richardson A."/>
            <person name="Raphael J."/>
            <person name="Moreira D."/>
            <person name="Taycher E."/>
            <person name="Zuo D."/>
            <person name="Mohr S."/>
            <person name="Kane M.F."/>
            <person name="Williamson J."/>
            <person name="Simpson A.J.G."/>
            <person name="Bulyk M.L."/>
            <person name="Harlow E."/>
            <person name="Marsischky G."/>
            <person name="Kolodner R.D."/>
            <person name="LaBaer J."/>
        </authorList>
    </citation>
    <scope>NUCLEOTIDE SEQUENCE [GENOMIC DNA]</scope>
    <source>
        <strain>ATCC 204508 / S288c</strain>
    </source>
</reference>
<reference key="6">
    <citation type="journal article" date="1994" name="Electrophoresis">
        <title>Protein identifications for a Saccharomyces cerevisiae protein database.</title>
        <authorList>
            <person name="Garrels J.I."/>
            <person name="Futcher B."/>
            <person name="Kobayashi R."/>
            <person name="Latter G.I."/>
            <person name="Schwender B."/>
            <person name="Volpe T."/>
            <person name="Warner J.R."/>
            <person name="McLaughlin C.S."/>
        </authorList>
    </citation>
    <scope>PROTEIN SEQUENCE OF 64-73</scope>
    <source>
        <strain>ATCC 204508 / S288c</strain>
    </source>
</reference>
<reference key="7">
    <citation type="journal article" date="1996" name="EMBO J.">
        <title>Dis3, implicated in mitotic control, binds directly to Ran and enhances the GEF activity of RCC1.</title>
        <authorList>
            <person name="Noguchi E."/>
            <person name="Hayashi N."/>
            <person name="Azuma Y."/>
            <person name="Seki T."/>
            <person name="Nakamura M."/>
            <person name="Nakashima N."/>
            <person name="Yanagida M."/>
            <person name="He X."/>
            <person name="Mueller U."/>
            <person name="Sazer S."/>
            <person name="Nishimoto T."/>
        </authorList>
    </citation>
    <scope>INTERACTION WITH DIS3</scope>
</reference>
<reference key="8">
    <citation type="journal article" date="2001" name="Mol. Genet. Genomics">
        <title>Functional analysis of the yeast Ran exchange factor Prp20p: in vivo evidence for the RanGTP gradient model.</title>
        <authorList>
            <person name="Akhtar N."/>
            <person name="Hagan H."/>
            <person name="Lopilato J.E."/>
            <person name="Corbett A.H."/>
        </authorList>
    </citation>
    <scope>INTERACTION WITH SRM1</scope>
</reference>
<reference key="9">
    <citation type="journal article" date="2001" name="Mol. Genet. Genomics">
        <title>Overexpression of Bud5p can suppress mutations in the Gsp1p guanine nucleotide exchange factor Prp20p in Saccharomyces cerevisiae.</title>
        <authorList>
            <person name="Clement M."/>
            <person name="Lavallee F."/>
            <person name="Barbes-Morin G."/>
            <person name="de Repentigny L."/>
            <person name="Belhumeur P."/>
        </authorList>
    </citation>
    <scope>INTERACTION WITH BUD5</scope>
</reference>
<reference key="10">
    <citation type="journal article" date="2004" name="Genes Dev.">
        <title>A pre-ribosome-associated HEAT-repeat protein is required for export of both ribosomal subunits.</title>
        <authorList>
            <person name="Oeffinger M."/>
            <person name="Dlakic M."/>
            <person name="Tollervey D."/>
        </authorList>
    </citation>
    <scope>INTERACTION WITH RRP12</scope>
</reference>
<reference key="11">
    <citation type="journal article" date="2005" name="Mol. Cell. Proteomics">
        <title>Quantitative phosphoproteomics applied to the yeast pheromone signaling pathway.</title>
        <authorList>
            <person name="Gruhler A."/>
            <person name="Olsen J.V."/>
            <person name="Mohammed S."/>
            <person name="Mortensen P."/>
            <person name="Faergeman N.J."/>
            <person name="Mann M."/>
            <person name="Jensen O.N."/>
        </authorList>
    </citation>
    <scope>ACETYLATION [LARGE SCALE ANALYSIS] AT SER-2</scope>
    <scope>PHOSPHORYLATION [LARGE SCALE ANALYSIS] AT SER-2</scope>
    <scope>CLEAVAGE OF INITIATOR METHIONINE [LARGE SCALE ANALYSIS]</scope>
    <scope>IDENTIFICATION BY MASS SPECTROMETRY [LARGE SCALE ANALYSIS]</scope>
    <source>
        <strain>YAL6B</strain>
    </source>
</reference>
<reference key="12">
    <citation type="journal article" date="2007" name="EMBO J.">
        <title>Cex1p is a novel cytoplasmic component of the Saccharomyces cerevisiae nuclear tRNA export machinery.</title>
        <authorList>
            <person name="McGuire A.T."/>
            <person name="Mangroo D."/>
        </authorList>
    </citation>
    <scope>INTERACTION WITH CEX1</scope>
</reference>
<comment type="function">
    <text>GTP-binding protein involved in nucleocytoplasmic transport. Required for the import of protein into the nucleus and also for RNA export. Essential for cell viability. By analogy with Ras, Ran may be activated when GTP is exchanged for bound GDP by RCC1 and inactivated when GTP is hydrolyzed by Ran upon activation by RanGAP1.</text>
</comment>
<comment type="subunit">
    <text evidence="1 3 4 5 6 7">Found in a nuclear export complex with RanGTP, exportin and pre-miRNA (By similarity). Forms a complex with YRB1. Interacts with BUD5, CEX1, RRP12, SRM1, and DIS3/RRP44.</text>
</comment>
<comment type="interaction">
    <interactant intactId="EBI-7926">
        <id>P32835</id>
    </interactant>
    <interactant intactId="EBI-22761">
        <id>P43583</id>
        <label>BLM10</label>
    </interactant>
    <organismsDiffer>false</organismsDiffer>
    <experiments>2</experiments>
</comment>
<comment type="interaction">
    <interactant intactId="EBI-7926">
        <id>P32835</id>
    </interactant>
    <interactant intactId="EBI-3853">
        <id>P25300</id>
        <label>BUD5</label>
    </interactant>
    <organismsDiffer>false</organismsDiffer>
    <experiments>2</experiments>
</comment>
<comment type="interaction">
    <interactant intactId="EBI-7926">
        <id>P32835</id>
    </interactant>
    <interactant intactId="EBI-9174">
        <id>P53067</id>
        <label>KAP114</label>
    </interactant>
    <organismsDiffer>false</organismsDiffer>
    <experiments>3</experiments>
</comment>
<comment type="interaction">
    <interactant intactId="EBI-7926">
        <id>P32835</id>
    </interactant>
    <interactant intactId="EBI-15799183">
        <id>O94258</id>
        <label>los1</label>
    </interactant>
    <organismsDiffer>true</organismsDiffer>
    <experiments>2</experiments>
</comment>
<comment type="subcellular location">
    <subcellularLocation>
        <location>Nucleus</location>
    </subcellularLocation>
</comment>
<comment type="similarity">
    <text evidence="2 8">Belongs to the small GTPase superfamily. Ran family.</text>
</comment>
<proteinExistence type="evidence at protein level"/>
<name>GSP1_YEAST</name>
<sequence length="219" mass="24810">MSAPAANGEVPTFKLVLVGDGGTGKTTFVKRHLTGEFEKKYIATIGVEVHPLSFYTNFGEIKFDVWDTAGQEKFGGLRDGYYINAQCAIIMFDVTSRITYKNVPNWHRDLVRVCENIPIVLCGNKVDVKERKVKAKTITFHRKKNLQYYDISAKSNYNFEKPFLWLARKLAGNPQLEFVASPALAPPEVQVDEQLMQQYQQEMEQATALPLPDEDDADL</sequence>
<organism>
    <name type="scientific">Saccharomyces cerevisiae (strain ATCC 204508 / S288c)</name>
    <name type="common">Baker's yeast</name>
    <dbReference type="NCBI Taxonomy" id="559292"/>
    <lineage>
        <taxon>Eukaryota</taxon>
        <taxon>Fungi</taxon>
        <taxon>Dikarya</taxon>
        <taxon>Ascomycota</taxon>
        <taxon>Saccharomycotina</taxon>
        <taxon>Saccharomycetes</taxon>
        <taxon>Saccharomycetales</taxon>
        <taxon>Saccharomycetaceae</taxon>
        <taxon>Saccharomyces</taxon>
    </lineage>
</organism>
<feature type="initiator methionine" description="Removed" evidence="9">
    <location>
        <position position="1"/>
    </location>
</feature>
<feature type="chain" id="PRO_0000208733" description="GTP-binding nuclear protein GSP1/CNR1">
    <location>
        <begin position="2"/>
        <end position="219"/>
    </location>
</feature>
<feature type="domain" description="Small GTPase Ran-type" evidence="2">
    <location>
        <begin position="9"/>
        <end position="173"/>
    </location>
</feature>
<feature type="region of interest" description="Switch-I" evidence="2">
    <location>
        <begin position="39"/>
        <end position="47"/>
    </location>
</feature>
<feature type="region of interest" description="Switch-II" evidence="2">
    <location>
        <begin position="70"/>
        <end position="86"/>
    </location>
</feature>
<feature type="binding site" evidence="1">
    <location>
        <begin position="20"/>
        <end position="27"/>
    </location>
    <ligand>
        <name>GTP</name>
        <dbReference type="ChEBI" id="CHEBI:37565"/>
    </ligand>
</feature>
<feature type="binding site" evidence="1">
    <location>
        <position position="70"/>
    </location>
    <ligand>
        <name>GTP</name>
        <dbReference type="ChEBI" id="CHEBI:37565"/>
    </ligand>
</feature>
<feature type="binding site" evidence="1">
    <location>
        <begin position="124"/>
        <end position="127"/>
    </location>
    <ligand>
        <name>GTP</name>
        <dbReference type="ChEBI" id="CHEBI:37565"/>
    </ligand>
</feature>
<feature type="binding site" evidence="1">
    <location>
        <begin position="152"/>
        <end position="154"/>
    </location>
    <ligand>
        <name>GTP</name>
        <dbReference type="ChEBI" id="CHEBI:37565"/>
    </ligand>
</feature>
<feature type="modified residue" description="N-acetylserine" evidence="9">
    <location>
        <position position="2"/>
    </location>
</feature>
<feature type="modified residue" description="Phosphoserine" evidence="9">
    <location>
        <position position="2"/>
    </location>
</feature>
<feature type="strand" evidence="10">
    <location>
        <begin position="12"/>
        <end position="19"/>
    </location>
</feature>
<feature type="helix" evidence="10">
    <location>
        <begin position="25"/>
        <end position="34"/>
    </location>
</feature>
<feature type="strand" evidence="10">
    <location>
        <begin position="46"/>
        <end position="56"/>
    </location>
</feature>
<feature type="strand" evidence="10">
    <location>
        <begin position="59"/>
        <end position="68"/>
    </location>
</feature>
<feature type="helix" evidence="10">
    <location>
        <begin position="72"/>
        <end position="74"/>
    </location>
</feature>
<feature type="helix" evidence="10">
    <location>
        <begin position="78"/>
        <end position="82"/>
    </location>
</feature>
<feature type="strand" evidence="10">
    <location>
        <begin position="87"/>
        <end position="93"/>
    </location>
</feature>
<feature type="helix" evidence="10">
    <location>
        <begin position="97"/>
        <end position="101"/>
    </location>
</feature>
<feature type="helix" evidence="10">
    <location>
        <begin position="103"/>
        <end position="113"/>
    </location>
</feature>
<feature type="strand" evidence="11">
    <location>
        <begin position="114"/>
        <end position="116"/>
    </location>
</feature>
<feature type="strand" evidence="10">
    <location>
        <begin position="119"/>
        <end position="124"/>
    </location>
</feature>
<feature type="strand" evidence="10">
    <location>
        <begin position="128"/>
        <end position="130"/>
    </location>
</feature>
<feature type="helix" evidence="10">
    <location>
        <begin position="135"/>
        <end position="137"/>
    </location>
</feature>
<feature type="helix" evidence="10">
    <location>
        <begin position="141"/>
        <end position="144"/>
    </location>
</feature>
<feature type="strand" evidence="10">
    <location>
        <begin position="147"/>
        <end position="150"/>
    </location>
</feature>
<feature type="turn" evidence="10">
    <location>
        <begin position="153"/>
        <end position="155"/>
    </location>
</feature>
<feature type="turn" evidence="10">
    <location>
        <begin position="157"/>
        <end position="160"/>
    </location>
</feature>
<feature type="helix" evidence="10">
    <location>
        <begin position="161"/>
        <end position="171"/>
    </location>
</feature>
<feature type="helix" evidence="10">
    <location>
        <begin position="200"/>
        <end position="207"/>
    </location>
</feature>
<feature type="turn" evidence="10">
    <location>
        <begin position="214"/>
        <end position="216"/>
    </location>
</feature>
<gene>
    <name type="primary">GSP1</name>
    <name type="synonym">CNR1</name>
    <name type="synonym">CST17</name>
    <name type="ordered locus">YLR293C</name>
    <name type="ORF">L8003.19</name>
</gene>
<accession>P32835</accession>
<accession>D6VYT9</accession>
<dbReference type="EMBL" id="X71945">
    <property type="protein sequence ID" value="CAA50747.1"/>
    <property type="molecule type" value="Genomic_DNA"/>
</dbReference>
<dbReference type="EMBL" id="L08690">
    <property type="protein sequence ID" value="AAA34653.1"/>
    <property type="molecule type" value="Genomic_DNA"/>
</dbReference>
<dbReference type="EMBL" id="U17243">
    <property type="protein sequence ID" value="AAB67339.1"/>
    <property type="molecule type" value="Genomic_DNA"/>
</dbReference>
<dbReference type="EMBL" id="AY558363">
    <property type="protein sequence ID" value="AAS56689.1"/>
    <property type="molecule type" value="Genomic_DNA"/>
</dbReference>
<dbReference type="EMBL" id="BK006945">
    <property type="protein sequence ID" value="DAA09605.1"/>
    <property type="molecule type" value="Genomic_DNA"/>
</dbReference>
<dbReference type="PIR" id="S35504">
    <property type="entry name" value="S35504"/>
</dbReference>
<dbReference type="RefSeq" id="NP_013396.1">
    <property type="nucleotide sequence ID" value="NM_001182181.1"/>
</dbReference>
<dbReference type="PDB" id="2X19">
    <property type="method" value="X-ray"/>
    <property type="resolution" value="2.80 A"/>
    <property type="chains" value="A=8-179"/>
</dbReference>
<dbReference type="PDB" id="3ICQ">
    <property type="method" value="X-ray"/>
    <property type="resolution" value="3.20 A"/>
    <property type="chains" value="B/C=9-179"/>
</dbReference>
<dbReference type="PDB" id="3M1I">
    <property type="method" value="X-ray"/>
    <property type="resolution" value="2.00 A"/>
    <property type="chains" value="A=1-219"/>
</dbReference>
<dbReference type="PDB" id="3WYG">
    <property type="method" value="X-ray"/>
    <property type="resolution" value="2.15 A"/>
    <property type="chains" value="A=1-182"/>
</dbReference>
<dbReference type="PDB" id="8DYO">
    <property type="method" value="EM"/>
    <property type="resolution" value="7.10 A"/>
    <property type="chains" value="B=1-219"/>
</dbReference>
<dbReference type="PDB" id="8F19">
    <property type="method" value="EM"/>
    <property type="resolution" value="3.49 A"/>
    <property type="chains" value="B=1-179"/>
</dbReference>
<dbReference type="PDB" id="8F1E">
    <property type="method" value="EM"/>
    <property type="resolution" value="3.28 A"/>
    <property type="chains" value="D=1-179"/>
</dbReference>
<dbReference type="PDB" id="8F7A">
    <property type="method" value="EM"/>
    <property type="resolution" value="3.78 A"/>
    <property type="chains" value="B=1-219"/>
</dbReference>
<dbReference type="PDB" id="8QYZ">
    <property type="method" value="X-ray"/>
    <property type="resolution" value="3.00 A"/>
    <property type="chains" value="A/B/E/G=1-182"/>
</dbReference>
<dbReference type="PDB" id="9B3I">
    <property type="method" value="EM"/>
    <property type="resolution" value="2.88 A"/>
    <property type="chains" value="D=2-179"/>
</dbReference>
<dbReference type="PDBsum" id="2X19"/>
<dbReference type="PDBsum" id="3ICQ"/>
<dbReference type="PDBsum" id="3M1I"/>
<dbReference type="PDBsum" id="3WYG"/>
<dbReference type="PDBsum" id="8DYO"/>
<dbReference type="PDBsum" id="8F19"/>
<dbReference type="PDBsum" id="8F1E"/>
<dbReference type="PDBsum" id="8F7A"/>
<dbReference type="PDBsum" id="8QYZ"/>
<dbReference type="PDBsum" id="9B3I"/>
<dbReference type="EMDB" id="EMD-27780"/>
<dbReference type="EMDB" id="EMD-28788"/>
<dbReference type="EMDB" id="EMD-28796"/>
<dbReference type="EMDB" id="EMD-28899"/>
<dbReference type="SMR" id="P32835"/>
<dbReference type="BioGRID" id="31559">
    <property type="interactions" value="656"/>
</dbReference>
<dbReference type="DIP" id="DIP-747N"/>
<dbReference type="FunCoup" id="P32835">
    <property type="interactions" value="1856"/>
</dbReference>
<dbReference type="IntAct" id="P32835">
    <property type="interactions" value="32"/>
</dbReference>
<dbReference type="MINT" id="P32835"/>
<dbReference type="STRING" id="4932.YLR293C"/>
<dbReference type="BindingDB" id="P32835"/>
<dbReference type="MoonDB" id="P32835">
    <property type="type" value="Predicted"/>
</dbReference>
<dbReference type="TCDB" id="9.A.50.1.1">
    <property type="family name" value="the nuclear t-rna exporter (trna-e) family"/>
</dbReference>
<dbReference type="iPTMnet" id="P32835"/>
<dbReference type="PaxDb" id="4932-YLR293C"/>
<dbReference type="PeptideAtlas" id="P32835"/>
<dbReference type="EnsemblFungi" id="YLR293C_mRNA">
    <property type="protein sequence ID" value="YLR293C"/>
    <property type="gene ID" value="YLR293C"/>
</dbReference>
<dbReference type="GeneID" id="851000"/>
<dbReference type="KEGG" id="sce:YLR293C"/>
<dbReference type="AGR" id="SGD:S000004284"/>
<dbReference type="SGD" id="S000004284">
    <property type="gene designation" value="GSP1"/>
</dbReference>
<dbReference type="VEuPathDB" id="FungiDB:YLR293C"/>
<dbReference type="eggNOG" id="KOG0096">
    <property type="taxonomic scope" value="Eukaryota"/>
</dbReference>
<dbReference type="GeneTree" id="ENSGT00940000153786"/>
<dbReference type="HOGENOM" id="CLU_041217_13_0_1"/>
<dbReference type="InParanoid" id="P32835"/>
<dbReference type="OMA" id="NACGVEN"/>
<dbReference type="OrthoDB" id="48625at2759"/>
<dbReference type="BioCyc" id="YEAST:G3O-32388-MONOMER"/>
<dbReference type="Reactome" id="R-SCE-9615933">
    <property type="pathway name" value="Postmitotic nuclear pore complex (NPC) reformation"/>
</dbReference>
<dbReference type="BioGRID-ORCS" id="851000">
    <property type="hits" value="3 hits in 10 CRISPR screens"/>
</dbReference>
<dbReference type="CD-CODE" id="21A3CED6">
    <property type="entry name" value="Synthetic Condensate 000267"/>
</dbReference>
<dbReference type="CD-CODE" id="28F24DDF">
    <property type="entry name" value="Synthetic Condensate 000256"/>
</dbReference>
<dbReference type="CD-CODE" id="500EDC60">
    <property type="entry name" value="Synthetic Condensate 000260"/>
</dbReference>
<dbReference type="CD-CODE" id="94A6FFB4">
    <property type="entry name" value="Synthetic Condensate 000253"/>
</dbReference>
<dbReference type="EvolutionaryTrace" id="P32835"/>
<dbReference type="PRO" id="PR:P32835"/>
<dbReference type="Proteomes" id="UP000002311">
    <property type="component" value="Chromosome XII"/>
</dbReference>
<dbReference type="RNAct" id="P32835">
    <property type="molecule type" value="protein"/>
</dbReference>
<dbReference type="GO" id="GO:0005737">
    <property type="term" value="C:cytoplasm"/>
    <property type="evidence" value="ECO:0000314"/>
    <property type="project" value="SGD"/>
</dbReference>
<dbReference type="GO" id="GO:0005829">
    <property type="term" value="C:cytosol"/>
    <property type="evidence" value="ECO:0007005"/>
    <property type="project" value="SGD"/>
</dbReference>
<dbReference type="GO" id="GO:0005634">
    <property type="term" value="C:nucleus"/>
    <property type="evidence" value="ECO:0000314"/>
    <property type="project" value="SGD"/>
</dbReference>
<dbReference type="GO" id="GO:0005525">
    <property type="term" value="F:GTP binding"/>
    <property type="evidence" value="ECO:0007669"/>
    <property type="project" value="UniProtKB-KW"/>
</dbReference>
<dbReference type="GO" id="GO:0003924">
    <property type="term" value="F:GTPase activity"/>
    <property type="evidence" value="ECO:0000314"/>
    <property type="project" value="SGD"/>
</dbReference>
<dbReference type="GO" id="GO:0000467">
    <property type="term" value="P:exonucleolytic trimming to generate mature 3'-end of 5.8S rRNA from tricistronic rRNA transcript (SSU-rRNA, 5.8S rRNA, LSU-rRNA)"/>
    <property type="evidence" value="ECO:0000315"/>
    <property type="project" value="SGD"/>
</dbReference>
<dbReference type="GO" id="GO:0006997">
    <property type="term" value="P:nucleus organization"/>
    <property type="evidence" value="ECO:0000316"/>
    <property type="project" value="SGD"/>
</dbReference>
<dbReference type="GO" id="GO:0016973">
    <property type="term" value="P:poly(A)+ mRNA export from nucleus"/>
    <property type="evidence" value="ECO:0000315"/>
    <property type="project" value="SGD"/>
</dbReference>
<dbReference type="GO" id="GO:0006606">
    <property type="term" value="P:protein import into nucleus"/>
    <property type="evidence" value="ECO:0000315"/>
    <property type="project" value="SGD"/>
</dbReference>
<dbReference type="GO" id="GO:1901987">
    <property type="term" value="P:regulation of cell cycle phase transition"/>
    <property type="evidence" value="ECO:0000314"/>
    <property type="project" value="SGD"/>
</dbReference>
<dbReference type="GO" id="GO:0046822">
    <property type="term" value="P:regulation of nucleocytoplasmic transport"/>
    <property type="evidence" value="ECO:0000314"/>
    <property type="project" value="SGD"/>
</dbReference>
<dbReference type="GO" id="GO:0000054">
    <property type="term" value="P:ribosomal subunit export from nucleus"/>
    <property type="evidence" value="ECO:0000318"/>
    <property type="project" value="GO_Central"/>
</dbReference>
<dbReference type="CDD" id="cd00877">
    <property type="entry name" value="Ran"/>
    <property type="match status" value="1"/>
</dbReference>
<dbReference type="FunFam" id="3.40.50.300:FF:000131">
    <property type="entry name" value="GTP-binding nuclear protein Ran"/>
    <property type="match status" value="1"/>
</dbReference>
<dbReference type="Gene3D" id="3.40.50.300">
    <property type="entry name" value="P-loop containing nucleotide triphosphate hydrolases"/>
    <property type="match status" value="1"/>
</dbReference>
<dbReference type="InterPro" id="IPR027417">
    <property type="entry name" value="P-loop_NTPase"/>
</dbReference>
<dbReference type="InterPro" id="IPR002041">
    <property type="entry name" value="Ran_GTPase"/>
</dbReference>
<dbReference type="InterPro" id="IPR005225">
    <property type="entry name" value="Small_GTP-bd"/>
</dbReference>
<dbReference type="InterPro" id="IPR001806">
    <property type="entry name" value="Small_GTPase"/>
</dbReference>
<dbReference type="NCBIfam" id="TIGR00231">
    <property type="entry name" value="small_GTP"/>
    <property type="match status" value="1"/>
</dbReference>
<dbReference type="PANTHER" id="PTHR24071:SF0">
    <property type="entry name" value="GTP-BINDING NUCLEAR PROTEIN RAN"/>
    <property type="match status" value="1"/>
</dbReference>
<dbReference type="PANTHER" id="PTHR24071">
    <property type="entry name" value="RAN GTPASE"/>
    <property type="match status" value="1"/>
</dbReference>
<dbReference type="Pfam" id="PF00071">
    <property type="entry name" value="Ras"/>
    <property type="match status" value="1"/>
</dbReference>
<dbReference type="PRINTS" id="PR00627">
    <property type="entry name" value="GTPRANTC4"/>
</dbReference>
<dbReference type="SMART" id="SM00175">
    <property type="entry name" value="RAB"/>
    <property type="match status" value="1"/>
</dbReference>
<dbReference type="SMART" id="SM00176">
    <property type="entry name" value="RAN"/>
    <property type="match status" value="1"/>
</dbReference>
<dbReference type="SMART" id="SM00173">
    <property type="entry name" value="RAS"/>
    <property type="match status" value="1"/>
</dbReference>
<dbReference type="SMART" id="SM00174">
    <property type="entry name" value="RHO"/>
    <property type="match status" value="1"/>
</dbReference>
<dbReference type="SUPFAM" id="SSF52540">
    <property type="entry name" value="P-loop containing nucleoside triphosphate hydrolases"/>
    <property type="match status" value="1"/>
</dbReference>
<dbReference type="PROSITE" id="PS51418">
    <property type="entry name" value="RAN"/>
    <property type="match status" value="1"/>
</dbReference>